<feature type="chain" id="PRO_1000013925" description="Ubiquinone biosynthesis O-methyltransferase">
    <location>
        <begin position="1"/>
        <end position="236"/>
    </location>
</feature>
<feature type="binding site" evidence="1">
    <location>
        <position position="39"/>
    </location>
    <ligand>
        <name>S-adenosyl-L-methionine</name>
        <dbReference type="ChEBI" id="CHEBI:59789"/>
    </ligand>
</feature>
<feature type="binding site" evidence="1">
    <location>
        <position position="59"/>
    </location>
    <ligand>
        <name>S-adenosyl-L-methionine</name>
        <dbReference type="ChEBI" id="CHEBI:59789"/>
    </ligand>
</feature>
<feature type="binding site" evidence="1">
    <location>
        <position position="80"/>
    </location>
    <ligand>
        <name>S-adenosyl-L-methionine</name>
        <dbReference type="ChEBI" id="CHEBI:59789"/>
    </ligand>
</feature>
<feature type="binding site" evidence="1">
    <location>
        <position position="124"/>
    </location>
    <ligand>
        <name>S-adenosyl-L-methionine</name>
        <dbReference type="ChEBI" id="CHEBI:59789"/>
    </ligand>
</feature>
<protein>
    <recommendedName>
        <fullName evidence="1">Ubiquinone biosynthesis O-methyltransferase</fullName>
    </recommendedName>
    <alternativeName>
        <fullName evidence="1">2-polyprenyl-6-hydroxyphenol methylase</fullName>
        <ecNumber evidence="1">2.1.1.222</ecNumber>
    </alternativeName>
    <alternativeName>
        <fullName evidence="1">3-demethylubiquinone 3-O-methyltransferase</fullName>
        <ecNumber evidence="1">2.1.1.64</ecNumber>
    </alternativeName>
</protein>
<proteinExistence type="inferred from homology"/>
<dbReference type="EC" id="2.1.1.222" evidence="1"/>
<dbReference type="EC" id="2.1.1.64" evidence="1"/>
<dbReference type="EMBL" id="CP000446">
    <property type="protein sequence ID" value="ABI38992.1"/>
    <property type="molecule type" value="Genomic_DNA"/>
</dbReference>
<dbReference type="RefSeq" id="WP_011622689.1">
    <property type="nucleotide sequence ID" value="NC_008321.1"/>
</dbReference>
<dbReference type="SMR" id="Q0HIX5"/>
<dbReference type="KEGG" id="she:Shewmr4_1918"/>
<dbReference type="HOGENOM" id="CLU_042432_5_0_6"/>
<dbReference type="UniPathway" id="UPA00232"/>
<dbReference type="GO" id="GO:0102208">
    <property type="term" value="F:2-polyprenyl-6-hydroxyphenol methylase activity"/>
    <property type="evidence" value="ECO:0007669"/>
    <property type="project" value="UniProtKB-EC"/>
</dbReference>
<dbReference type="GO" id="GO:0061542">
    <property type="term" value="F:3-demethylubiquinol 3-O-methyltransferase activity"/>
    <property type="evidence" value="ECO:0007669"/>
    <property type="project" value="UniProtKB-UniRule"/>
</dbReference>
<dbReference type="GO" id="GO:0010420">
    <property type="term" value="F:polyprenyldihydroxybenzoate methyltransferase activity"/>
    <property type="evidence" value="ECO:0007669"/>
    <property type="project" value="InterPro"/>
</dbReference>
<dbReference type="GO" id="GO:0032259">
    <property type="term" value="P:methylation"/>
    <property type="evidence" value="ECO:0007669"/>
    <property type="project" value="UniProtKB-KW"/>
</dbReference>
<dbReference type="CDD" id="cd02440">
    <property type="entry name" value="AdoMet_MTases"/>
    <property type="match status" value="1"/>
</dbReference>
<dbReference type="FunFam" id="3.40.50.150:FF:000028">
    <property type="entry name" value="Ubiquinone biosynthesis O-methyltransferase"/>
    <property type="match status" value="1"/>
</dbReference>
<dbReference type="Gene3D" id="3.40.50.150">
    <property type="entry name" value="Vaccinia Virus protein VP39"/>
    <property type="match status" value="1"/>
</dbReference>
<dbReference type="HAMAP" id="MF_00472">
    <property type="entry name" value="UbiG"/>
    <property type="match status" value="1"/>
</dbReference>
<dbReference type="InterPro" id="IPR029063">
    <property type="entry name" value="SAM-dependent_MTases_sf"/>
</dbReference>
<dbReference type="InterPro" id="IPR010233">
    <property type="entry name" value="UbiG_MeTrfase"/>
</dbReference>
<dbReference type="NCBIfam" id="TIGR01983">
    <property type="entry name" value="UbiG"/>
    <property type="match status" value="1"/>
</dbReference>
<dbReference type="PANTHER" id="PTHR43464">
    <property type="entry name" value="METHYLTRANSFERASE"/>
    <property type="match status" value="1"/>
</dbReference>
<dbReference type="PANTHER" id="PTHR43464:SF19">
    <property type="entry name" value="UBIQUINONE BIOSYNTHESIS O-METHYLTRANSFERASE, MITOCHONDRIAL"/>
    <property type="match status" value="1"/>
</dbReference>
<dbReference type="Pfam" id="PF13489">
    <property type="entry name" value="Methyltransf_23"/>
    <property type="match status" value="1"/>
</dbReference>
<dbReference type="SUPFAM" id="SSF53335">
    <property type="entry name" value="S-adenosyl-L-methionine-dependent methyltransferases"/>
    <property type="match status" value="1"/>
</dbReference>
<evidence type="ECO:0000255" key="1">
    <source>
        <dbReference type="HAMAP-Rule" id="MF_00472"/>
    </source>
</evidence>
<organism>
    <name type="scientific">Shewanella sp. (strain MR-4)</name>
    <dbReference type="NCBI Taxonomy" id="60480"/>
    <lineage>
        <taxon>Bacteria</taxon>
        <taxon>Pseudomonadati</taxon>
        <taxon>Pseudomonadota</taxon>
        <taxon>Gammaproteobacteria</taxon>
        <taxon>Alteromonadales</taxon>
        <taxon>Shewanellaceae</taxon>
        <taxon>Shewanella</taxon>
    </lineage>
</organism>
<comment type="function">
    <text evidence="1">O-methyltransferase that catalyzes the 2 O-methylation steps in the ubiquinone biosynthetic pathway.</text>
</comment>
<comment type="catalytic activity">
    <reaction evidence="1">
        <text>a 3-demethylubiquinol + S-adenosyl-L-methionine = a ubiquinol + S-adenosyl-L-homocysteine + H(+)</text>
        <dbReference type="Rhea" id="RHEA:44380"/>
        <dbReference type="Rhea" id="RHEA-COMP:9566"/>
        <dbReference type="Rhea" id="RHEA-COMP:10914"/>
        <dbReference type="ChEBI" id="CHEBI:15378"/>
        <dbReference type="ChEBI" id="CHEBI:17976"/>
        <dbReference type="ChEBI" id="CHEBI:57856"/>
        <dbReference type="ChEBI" id="CHEBI:59789"/>
        <dbReference type="ChEBI" id="CHEBI:84422"/>
        <dbReference type="EC" id="2.1.1.64"/>
    </reaction>
</comment>
<comment type="catalytic activity">
    <reaction evidence="1">
        <text>a 3-(all-trans-polyprenyl)benzene-1,2-diol + S-adenosyl-L-methionine = a 2-methoxy-6-(all-trans-polyprenyl)phenol + S-adenosyl-L-homocysteine + H(+)</text>
        <dbReference type="Rhea" id="RHEA:31411"/>
        <dbReference type="Rhea" id="RHEA-COMP:9550"/>
        <dbReference type="Rhea" id="RHEA-COMP:9551"/>
        <dbReference type="ChEBI" id="CHEBI:15378"/>
        <dbReference type="ChEBI" id="CHEBI:57856"/>
        <dbReference type="ChEBI" id="CHEBI:59789"/>
        <dbReference type="ChEBI" id="CHEBI:62729"/>
        <dbReference type="ChEBI" id="CHEBI:62731"/>
        <dbReference type="EC" id="2.1.1.222"/>
    </reaction>
</comment>
<comment type="pathway">
    <text evidence="1">Cofactor biosynthesis; ubiquinone biosynthesis.</text>
</comment>
<comment type="similarity">
    <text evidence="1">Belongs to the methyltransferase superfamily. UbiG/COQ3 family.</text>
</comment>
<keyword id="KW-0489">Methyltransferase</keyword>
<keyword id="KW-0949">S-adenosyl-L-methionine</keyword>
<keyword id="KW-0808">Transferase</keyword>
<keyword id="KW-0831">Ubiquinone biosynthesis</keyword>
<reference key="1">
    <citation type="submission" date="2006-08" db="EMBL/GenBank/DDBJ databases">
        <title>Complete sequence of Shewanella sp. MR-4.</title>
        <authorList>
            <consortium name="US DOE Joint Genome Institute"/>
            <person name="Copeland A."/>
            <person name="Lucas S."/>
            <person name="Lapidus A."/>
            <person name="Barry K."/>
            <person name="Detter J.C."/>
            <person name="Glavina del Rio T."/>
            <person name="Hammon N."/>
            <person name="Israni S."/>
            <person name="Dalin E."/>
            <person name="Tice H."/>
            <person name="Pitluck S."/>
            <person name="Kiss H."/>
            <person name="Brettin T."/>
            <person name="Bruce D."/>
            <person name="Han C."/>
            <person name="Tapia R."/>
            <person name="Gilna P."/>
            <person name="Schmutz J."/>
            <person name="Larimer F."/>
            <person name="Land M."/>
            <person name="Hauser L."/>
            <person name="Kyrpides N."/>
            <person name="Mikhailova N."/>
            <person name="Nealson K."/>
            <person name="Konstantinidis K."/>
            <person name="Klappenbach J."/>
            <person name="Tiedje J."/>
            <person name="Richardson P."/>
        </authorList>
    </citation>
    <scope>NUCLEOTIDE SEQUENCE [LARGE SCALE GENOMIC DNA]</scope>
    <source>
        <strain>MR-4</strain>
    </source>
</reference>
<accession>Q0HIX5</accession>
<sequence length="236" mass="26384">MQQSTNVDPQEIAKFERMAETWWDLNGEFKPLHLLNPLRLNYIDQTAGGIFGKKVLDVGCGGGILSESMARIGAVVDGLDMGEEPLEVARLHALETGVSINYVKNTAEAHREDHREYYDVVTCMEMLEHVPDPQSVIQACCDMVKPGGFVFFSTINRNIKSFVETIIGAEYLLKMLPIGTHDHNKFIKPSELMALVDNTDLLCKDALGITYNPLTGIFKYTPKVDVNYMIATQKVD</sequence>
<name>UBIG_SHESM</name>
<gene>
    <name evidence="1" type="primary">ubiG</name>
    <name type="ordered locus">Shewmr4_1918</name>
</gene>